<name>RM04_AJECN</name>
<evidence type="ECO:0000250" key="1"/>
<evidence type="ECO:0000255" key="2"/>
<evidence type="ECO:0000256" key="3">
    <source>
        <dbReference type="SAM" id="MobiDB-lite"/>
    </source>
</evidence>
<evidence type="ECO:0000305" key="4"/>
<protein>
    <recommendedName>
        <fullName evidence="4">Large ribosomal subunit protein uL29m</fullName>
    </recommendedName>
    <alternativeName>
        <fullName>54S ribosomal protein L4, mitochondrial</fullName>
    </alternativeName>
</protein>
<sequence length="248" mass="28449">MPSRTITRLVRLYGGTPLVELPPIFLAPALQFPSLHFASFQCLKFSTTPAPGLKLDLSKHRGVSAIHRTGPRYPLSVSKYPLPRPVKPKEQEKRPSNPKHGLWGFFGPDRKPIPTPEEEYAHGRAWSIQELRQKSWDDLHKLYWLCVKERNRIATARYERQRLQAGYGDYESNNRDKTVRGTQQSIKQVLRERWYAWEDARQLYESGEYSPADAQVMEAEAYAYEPPALDVEEPKGEASDSVKTPPSS</sequence>
<organism>
    <name type="scientific">Ajellomyces capsulatus (strain NAm1 / WU24)</name>
    <name type="common">Darling's disease fungus</name>
    <name type="synonym">Histoplasma capsulatum</name>
    <dbReference type="NCBI Taxonomy" id="2059318"/>
    <lineage>
        <taxon>Eukaryota</taxon>
        <taxon>Fungi</taxon>
        <taxon>Dikarya</taxon>
        <taxon>Ascomycota</taxon>
        <taxon>Pezizomycotina</taxon>
        <taxon>Eurotiomycetes</taxon>
        <taxon>Eurotiomycetidae</taxon>
        <taxon>Onygenales</taxon>
        <taxon>Ajellomycetaceae</taxon>
        <taxon>Histoplasma</taxon>
    </lineage>
</organism>
<keyword id="KW-0496">Mitochondrion</keyword>
<keyword id="KW-1185">Reference proteome</keyword>
<keyword id="KW-0687">Ribonucleoprotein</keyword>
<keyword id="KW-0689">Ribosomal protein</keyword>
<keyword id="KW-0809">Transit peptide</keyword>
<comment type="subunit">
    <text evidence="1">Component of the mitochondrial large ribosomal subunit. Mature mitochondrial ribosomes consist of a small (37S) and a large (54S) subunit. The 37S subunit contains at least 33 different proteins and 1 molecule of RNA (15S). The 54S subunit contains at least 45 different proteins and 1 molecule of RNA (21S) (By similarity).</text>
</comment>
<comment type="subcellular location">
    <subcellularLocation>
        <location evidence="1">Mitochondrion</location>
    </subcellularLocation>
</comment>
<comment type="similarity">
    <text evidence="4">Belongs to the universal ribosomal protein uL29 family.</text>
</comment>
<reference key="1">
    <citation type="journal article" date="2009" name="Genome Res.">
        <title>Comparative genomic analyses of the human fungal pathogens Coccidioides and their relatives.</title>
        <authorList>
            <person name="Sharpton T.J."/>
            <person name="Stajich J.E."/>
            <person name="Rounsley S.D."/>
            <person name="Gardner M.J."/>
            <person name="Wortman J.R."/>
            <person name="Jordar V.S."/>
            <person name="Maiti R."/>
            <person name="Kodira C.D."/>
            <person name="Neafsey D.E."/>
            <person name="Zeng Q."/>
            <person name="Hung C.-Y."/>
            <person name="McMahan C."/>
            <person name="Muszewska A."/>
            <person name="Grynberg M."/>
            <person name="Mandel M.A."/>
            <person name="Kellner E.M."/>
            <person name="Barker B.M."/>
            <person name="Galgiani J.N."/>
            <person name="Orbach M.J."/>
            <person name="Kirkland T.N."/>
            <person name="Cole G.T."/>
            <person name="Henn M.R."/>
            <person name="Birren B.W."/>
            <person name="Taylor J.W."/>
        </authorList>
    </citation>
    <scope>NUCLEOTIDE SEQUENCE [LARGE SCALE GENOMIC DNA]</scope>
    <source>
        <strain>NAm1 / WU24</strain>
    </source>
</reference>
<gene>
    <name type="primary">MRPL4</name>
    <name type="ORF">HCAG_07831</name>
</gene>
<accession>A6RDX3</accession>
<proteinExistence type="inferred from homology"/>
<dbReference type="EMBL" id="CH476663">
    <property type="protein sequence ID" value="EDN11378.1"/>
    <property type="molecule type" value="Genomic_DNA"/>
</dbReference>
<dbReference type="SMR" id="A6RDX3"/>
<dbReference type="STRING" id="339724.A6RDX3"/>
<dbReference type="KEGG" id="aje:HCAG_07831"/>
<dbReference type="VEuPathDB" id="FungiDB:HCAG_07831"/>
<dbReference type="HOGENOM" id="CLU_063281_0_0_1"/>
<dbReference type="OMA" id="YAHGRAW"/>
<dbReference type="OrthoDB" id="1581at299071"/>
<dbReference type="Proteomes" id="UP000009297">
    <property type="component" value="Unassembled WGS sequence"/>
</dbReference>
<dbReference type="GO" id="GO:0005762">
    <property type="term" value="C:mitochondrial large ribosomal subunit"/>
    <property type="evidence" value="ECO:0007669"/>
    <property type="project" value="TreeGrafter"/>
</dbReference>
<dbReference type="GO" id="GO:0003735">
    <property type="term" value="F:structural constituent of ribosome"/>
    <property type="evidence" value="ECO:0007669"/>
    <property type="project" value="InterPro"/>
</dbReference>
<dbReference type="GO" id="GO:0032543">
    <property type="term" value="P:mitochondrial translation"/>
    <property type="evidence" value="ECO:0007669"/>
    <property type="project" value="TreeGrafter"/>
</dbReference>
<dbReference type="Gene3D" id="6.10.330.20">
    <property type="match status" value="1"/>
</dbReference>
<dbReference type="InterPro" id="IPR038340">
    <property type="entry name" value="MRP-L47_sf"/>
</dbReference>
<dbReference type="InterPro" id="IPR010729">
    <property type="entry name" value="Ribosomal_uL29_mit"/>
</dbReference>
<dbReference type="PANTHER" id="PTHR21183:SF18">
    <property type="entry name" value="LARGE RIBOSOMAL SUBUNIT PROTEIN UL29M"/>
    <property type="match status" value="1"/>
</dbReference>
<dbReference type="PANTHER" id="PTHR21183">
    <property type="entry name" value="RIBOSOMAL PROTEIN L47, MITOCHONDRIAL-RELATED"/>
    <property type="match status" value="1"/>
</dbReference>
<dbReference type="Pfam" id="PF06984">
    <property type="entry name" value="MRP-L47"/>
    <property type="match status" value="1"/>
</dbReference>
<feature type="transit peptide" description="Mitochondrion" evidence="2">
    <location>
        <begin position="1"/>
        <end status="unknown"/>
    </location>
</feature>
<feature type="chain" id="PRO_0000372388" description="Large ribosomal subunit protein uL29m">
    <location>
        <begin status="unknown"/>
        <end position="248"/>
    </location>
</feature>
<feature type="region of interest" description="Disordered" evidence="3">
    <location>
        <begin position="77"/>
        <end position="107"/>
    </location>
</feature>
<feature type="region of interest" description="Disordered" evidence="3">
    <location>
        <begin position="223"/>
        <end position="248"/>
    </location>
</feature>